<reference key="1">
    <citation type="journal article" date="1991" name="Mech. Dev.">
        <title>A cluster of four genes selectively expressed in the male germ line of Drosophila melanogaster.</title>
        <authorList>
            <person name="Kuhn R."/>
            <person name="Kuhn C."/>
            <person name="Boersch D."/>
            <person name="Glaetzer K.H."/>
            <person name="Schaefer U."/>
            <person name="Schaefer M."/>
        </authorList>
    </citation>
    <scope>NUCLEOTIDE SEQUENCE [GENOMIC DNA]</scope>
    <source>
        <strain>Oregon-R</strain>
    </source>
</reference>
<reference key="2">
    <citation type="journal article" date="2000" name="Science">
        <title>The genome sequence of Drosophila melanogaster.</title>
        <authorList>
            <person name="Adams M.D."/>
            <person name="Celniker S.E."/>
            <person name="Holt R.A."/>
            <person name="Evans C.A."/>
            <person name="Gocayne J.D."/>
            <person name="Amanatides P.G."/>
            <person name="Scherer S.E."/>
            <person name="Li P.W."/>
            <person name="Hoskins R.A."/>
            <person name="Galle R.F."/>
            <person name="George R.A."/>
            <person name="Lewis S.E."/>
            <person name="Richards S."/>
            <person name="Ashburner M."/>
            <person name="Henderson S.N."/>
            <person name="Sutton G.G."/>
            <person name="Wortman J.R."/>
            <person name="Yandell M.D."/>
            <person name="Zhang Q."/>
            <person name="Chen L.X."/>
            <person name="Brandon R.C."/>
            <person name="Rogers Y.-H.C."/>
            <person name="Blazej R.G."/>
            <person name="Champe M."/>
            <person name="Pfeiffer B.D."/>
            <person name="Wan K.H."/>
            <person name="Doyle C."/>
            <person name="Baxter E.G."/>
            <person name="Helt G."/>
            <person name="Nelson C.R."/>
            <person name="Miklos G.L.G."/>
            <person name="Abril J.F."/>
            <person name="Agbayani A."/>
            <person name="An H.-J."/>
            <person name="Andrews-Pfannkoch C."/>
            <person name="Baldwin D."/>
            <person name="Ballew R.M."/>
            <person name="Basu A."/>
            <person name="Baxendale J."/>
            <person name="Bayraktaroglu L."/>
            <person name="Beasley E.M."/>
            <person name="Beeson K.Y."/>
            <person name="Benos P.V."/>
            <person name="Berman B.P."/>
            <person name="Bhandari D."/>
            <person name="Bolshakov S."/>
            <person name="Borkova D."/>
            <person name="Botchan M.R."/>
            <person name="Bouck J."/>
            <person name="Brokstein P."/>
            <person name="Brottier P."/>
            <person name="Burtis K.C."/>
            <person name="Busam D.A."/>
            <person name="Butler H."/>
            <person name="Cadieu E."/>
            <person name="Center A."/>
            <person name="Chandra I."/>
            <person name="Cherry J.M."/>
            <person name="Cawley S."/>
            <person name="Dahlke C."/>
            <person name="Davenport L.B."/>
            <person name="Davies P."/>
            <person name="de Pablos B."/>
            <person name="Delcher A."/>
            <person name="Deng Z."/>
            <person name="Mays A.D."/>
            <person name="Dew I."/>
            <person name="Dietz S.M."/>
            <person name="Dodson K."/>
            <person name="Doup L.E."/>
            <person name="Downes M."/>
            <person name="Dugan-Rocha S."/>
            <person name="Dunkov B.C."/>
            <person name="Dunn P."/>
            <person name="Durbin K.J."/>
            <person name="Evangelista C.C."/>
            <person name="Ferraz C."/>
            <person name="Ferriera S."/>
            <person name="Fleischmann W."/>
            <person name="Fosler C."/>
            <person name="Gabrielian A.E."/>
            <person name="Garg N.S."/>
            <person name="Gelbart W.M."/>
            <person name="Glasser K."/>
            <person name="Glodek A."/>
            <person name="Gong F."/>
            <person name="Gorrell J.H."/>
            <person name="Gu Z."/>
            <person name="Guan P."/>
            <person name="Harris M."/>
            <person name="Harris N.L."/>
            <person name="Harvey D.A."/>
            <person name="Heiman T.J."/>
            <person name="Hernandez J.R."/>
            <person name="Houck J."/>
            <person name="Hostin D."/>
            <person name="Houston K.A."/>
            <person name="Howland T.J."/>
            <person name="Wei M.-H."/>
            <person name="Ibegwam C."/>
            <person name="Jalali M."/>
            <person name="Kalush F."/>
            <person name="Karpen G.H."/>
            <person name="Ke Z."/>
            <person name="Kennison J.A."/>
            <person name="Ketchum K.A."/>
            <person name="Kimmel B.E."/>
            <person name="Kodira C.D."/>
            <person name="Kraft C.L."/>
            <person name="Kravitz S."/>
            <person name="Kulp D."/>
            <person name="Lai Z."/>
            <person name="Lasko P."/>
            <person name="Lei Y."/>
            <person name="Levitsky A.A."/>
            <person name="Li J.H."/>
            <person name="Li Z."/>
            <person name="Liang Y."/>
            <person name="Lin X."/>
            <person name="Liu X."/>
            <person name="Mattei B."/>
            <person name="McIntosh T.C."/>
            <person name="McLeod M.P."/>
            <person name="McPherson D."/>
            <person name="Merkulov G."/>
            <person name="Milshina N.V."/>
            <person name="Mobarry C."/>
            <person name="Morris J."/>
            <person name="Moshrefi A."/>
            <person name="Mount S.M."/>
            <person name="Moy M."/>
            <person name="Murphy B."/>
            <person name="Murphy L."/>
            <person name="Muzny D.M."/>
            <person name="Nelson D.L."/>
            <person name="Nelson D.R."/>
            <person name="Nelson K.A."/>
            <person name="Nixon K."/>
            <person name="Nusskern D.R."/>
            <person name="Pacleb J.M."/>
            <person name="Palazzolo M."/>
            <person name="Pittman G.S."/>
            <person name="Pan S."/>
            <person name="Pollard J."/>
            <person name="Puri V."/>
            <person name="Reese M.G."/>
            <person name="Reinert K."/>
            <person name="Remington K."/>
            <person name="Saunders R.D.C."/>
            <person name="Scheeler F."/>
            <person name="Shen H."/>
            <person name="Shue B.C."/>
            <person name="Siden-Kiamos I."/>
            <person name="Simpson M."/>
            <person name="Skupski M.P."/>
            <person name="Smith T.J."/>
            <person name="Spier E."/>
            <person name="Spradling A.C."/>
            <person name="Stapleton M."/>
            <person name="Strong R."/>
            <person name="Sun E."/>
            <person name="Svirskas R."/>
            <person name="Tector C."/>
            <person name="Turner R."/>
            <person name="Venter E."/>
            <person name="Wang A.H."/>
            <person name="Wang X."/>
            <person name="Wang Z.-Y."/>
            <person name="Wassarman D.A."/>
            <person name="Weinstock G.M."/>
            <person name="Weissenbach J."/>
            <person name="Williams S.M."/>
            <person name="Woodage T."/>
            <person name="Worley K.C."/>
            <person name="Wu D."/>
            <person name="Yang S."/>
            <person name="Yao Q.A."/>
            <person name="Ye J."/>
            <person name="Yeh R.-F."/>
            <person name="Zaveri J.S."/>
            <person name="Zhan M."/>
            <person name="Zhang G."/>
            <person name="Zhao Q."/>
            <person name="Zheng L."/>
            <person name="Zheng X.H."/>
            <person name="Zhong F.N."/>
            <person name="Zhong W."/>
            <person name="Zhou X."/>
            <person name="Zhu S.C."/>
            <person name="Zhu X."/>
            <person name="Smith H.O."/>
            <person name="Gibbs R.A."/>
            <person name="Myers E.W."/>
            <person name="Rubin G.M."/>
            <person name="Venter J.C."/>
        </authorList>
    </citation>
    <scope>NUCLEOTIDE SEQUENCE [LARGE SCALE GENOMIC DNA]</scope>
    <source>
        <strain>Berkeley</strain>
    </source>
</reference>
<reference key="3">
    <citation type="journal article" date="2002" name="Genome Biol.">
        <title>Annotation of the Drosophila melanogaster euchromatic genome: a systematic review.</title>
        <authorList>
            <person name="Misra S."/>
            <person name="Crosby M.A."/>
            <person name="Mungall C.J."/>
            <person name="Matthews B.B."/>
            <person name="Campbell K.S."/>
            <person name="Hradecky P."/>
            <person name="Huang Y."/>
            <person name="Kaminker J.S."/>
            <person name="Millburn G.H."/>
            <person name="Prochnik S.E."/>
            <person name="Smith C.D."/>
            <person name="Tupy J.L."/>
            <person name="Whitfield E.J."/>
            <person name="Bayraktaroglu L."/>
            <person name="Berman B.P."/>
            <person name="Bettencourt B.R."/>
            <person name="Celniker S.E."/>
            <person name="de Grey A.D.N.J."/>
            <person name="Drysdale R.A."/>
            <person name="Harris N.L."/>
            <person name="Richter J."/>
            <person name="Russo S."/>
            <person name="Schroeder A.J."/>
            <person name="Shu S.Q."/>
            <person name="Stapleton M."/>
            <person name="Yamada C."/>
            <person name="Ashburner M."/>
            <person name="Gelbart W.M."/>
            <person name="Rubin G.M."/>
            <person name="Lewis S.E."/>
        </authorList>
    </citation>
    <scope>GENOME REANNOTATION</scope>
    <source>
        <strain>Berkeley</strain>
    </source>
</reference>
<reference key="4">
    <citation type="submission" date="2009-01" db="EMBL/GenBank/DDBJ databases">
        <authorList>
            <person name="Stapleton M."/>
            <person name="Carlson J.W."/>
            <person name="Booth B."/>
            <person name="Chavez C."/>
            <person name="Frise E."/>
            <person name="George R.A."/>
            <person name="Pacleb J.M."/>
            <person name="Park S."/>
            <person name="Wan K.H."/>
            <person name="Yu C."/>
            <person name="Celniker S.E."/>
        </authorList>
    </citation>
    <scope>NUCLEOTIDE SEQUENCE [LARGE SCALE MRNA]</scope>
    <source>
        <strain>Berkeley</strain>
    </source>
</reference>
<accession>Q01644</accession>
<accession>A8JQU9</accession>
<accession>Q4V3L6</accession>
<accession>Q9VIA0</accession>
<protein>
    <recommendedName>
        <fullName>Male-specific sperm protein Mst84Dc</fullName>
    </recommendedName>
</protein>
<sequence>MCCGPCGSCCGYYCCGPCCGPCGPRCGPCGSCCGPCGPCGPCCGPFGSCCGGCWC</sequence>
<evidence type="ECO:0000305" key="1"/>
<keyword id="KW-0217">Developmental protein</keyword>
<keyword id="KW-0221">Differentiation</keyword>
<keyword id="KW-1185">Reference proteome</keyword>
<keyword id="KW-0677">Repeat</keyword>
<keyword id="KW-0744">Spermatogenesis</keyword>
<gene>
    <name type="primary">Mst84Dc</name>
    <name type="ORF">CG17945</name>
</gene>
<proteinExistence type="evidence at transcript level"/>
<feature type="chain" id="PRO_0000096585" description="Male-specific sperm protein Mst84Dc">
    <location>
        <begin position="1"/>
        <end position="55"/>
    </location>
</feature>
<dbReference type="EMBL" id="X67703">
    <property type="protein sequence ID" value="CAA47939.1"/>
    <property type="molecule type" value="Genomic_DNA"/>
</dbReference>
<dbReference type="EMBL" id="AE014297">
    <property type="protein sequence ID" value="AAF54025.1"/>
    <property type="molecule type" value="Genomic_DNA"/>
</dbReference>
<dbReference type="EMBL" id="AE014297">
    <property type="protein sequence ID" value="ABW08614.1"/>
    <property type="molecule type" value="Genomic_DNA"/>
</dbReference>
<dbReference type="EMBL" id="BT023340">
    <property type="protein sequence ID" value="AAY55756.2"/>
    <property type="molecule type" value="mRNA"/>
</dbReference>
<dbReference type="PIR" id="S25774">
    <property type="entry name" value="S25774"/>
</dbReference>
<dbReference type="RefSeq" id="NP_001097701.1">
    <property type="nucleotide sequence ID" value="NM_001104231.2"/>
</dbReference>
<dbReference type="RefSeq" id="NP_524254.1">
    <property type="nucleotide sequence ID" value="NM_079530.4"/>
</dbReference>
<dbReference type="BioGRID" id="66078">
    <property type="interactions" value="32"/>
</dbReference>
<dbReference type="DIP" id="DIP-17052N"/>
<dbReference type="IntAct" id="Q01644">
    <property type="interactions" value="5"/>
</dbReference>
<dbReference type="STRING" id="7227.FBpp0081106"/>
<dbReference type="PaxDb" id="7227-FBpp0081106"/>
<dbReference type="DNASU" id="40887"/>
<dbReference type="EnsemblMetazoa" id="FBtr0081587">
    <property type="protein sequence ID" value="FBpp0081106"/>
    <property type="gene ID" value="FBgn0004174"/>
</dbReference>
<dbReference type="EnsemblMetazoa" id="FBtr0112841">
    <property type="protein sequence ID" value="FBpp0111754"/>
    <property type="gene ID" value="FBgn0004174"/>
</dbReference>
<dbReference type="GeneID" id="40887"/>
<dbReference type="KEGG" id="dme:Dmel_CG17945"/>
<dbReference type="UCSC" id="CG17945-RB">
    <property type="organism name" value="d. melanogaster"/>
</dbReference>
<dbReference type="AGR" id="FB:FBgn0004174"/>
<dbReference type="CTD" id="40887"/>
<dbReference type="FlyBase" id="FBgn0004174">
    <property type="gene designation" value="Mst84Dc"/>
</dbReference>
<dbReference type="VEuPathDB" id="VectorBase:FBgn0004174"/>
<dbReference type="eggNOG" id="KOG4726">
    <property type="taxonomic scope" value="Eukaryota"/>
</dbReference>
<dbReference type="HOGENOM" id="CLU_3034555_0_0_1"/>
<dbReference type="InParanoid" id="Q01644"/>
<dbReference type="OMA" id="PCPSFCK"/>
<dbReference type="BioGRID-ORCS" id="40887">
    <property type="hits" value="0 hits in 1 CRISPR screen"/>
</dbReference>
<dbReference type="ChiTaRS" id="Mst84Dc">
    <property type="organism name" value="fly"/>
</dbReference>
<dbReference type="GenomeRNAi" id="40887"/>
<dbReference type="PRO" id="PR:Q01644"/>
<dbReference type="Proteomes" id="UP000000803">
    <property type="component" value="Chromosome 3R"/>
</dbReference>
<dbReference type="Bgee" id="FBgn0004174">
    <property type="expression patterns" value="Expressed in early-mid elongation-stage spermatid (Drosophila) in testis and 55 other cell types or tissues"/>
</dbReference>
<dbReference type="ExpressionAtlas" id="Q01644">
    <property type="expression patterns" value="baseline and differential"/>
</dbReference>
<dbReference type="GO" id="GO:0007288">
    <property type="term" value="P:sperm axoneme assembly"/>
    <property type="evidence" value="ECO:0000316"/>
    <property type="project" value="FlyBase"/>
</dbReference>
<dbReference type="GO" id="GO:0007283">
    <property type="term" value="P:spermatogenesis"/>
    <property type="evidence" value="ECO:0000316"/>
    <property type="project" value="FlyBase"/>
</dbReference>
<dbReference type="InterPro" id="IPR005634">
    <property type="entry name" value="MSSP"/>
</dbReference>
<dbReference type="Pfam" id="PF03940">
    <property type="entry name" value="MSSP"/>
    <property type="match status" value="1"/>
</dbReference>
<organism>
    <name type="scientific">Drosophila melanogaster</name>
    <name type="common">Fruit fly</name>
    <dbReference type="NCBI Taxonomy" id="7227"/>
    <lineage>
        <taxon>Eukaryota</taxon>
        <taxon>Metazoa</taxon>
        <taxon>Ecdysozoa</taxon>
        <taxon>Arthropoda</taxon>
        <taxon>Hexapoda</taxon>
        <taxon>Insecta</taxon>
        <taxon>Pterygota</taxon>
        <taxon>Neoptera</taxon>
        <taxon>Endopterygota</taxon>
        <taxon>Diptera</taxon>
        <taxon>Brachycera</taxon>
        <taxon>Muscomorpha</taxon>
        <taxon>Ephydroidea</taxon>
        <taxon>Drosophilidae</taxon>
        <taxon>Drosophila</taxon>
        <taxon>Sophophora</taxon>
    </lineage>
</organism>
<name>MS84C_DROME</name>
<comment type="tissue specificity">
    <text>Testis.</text>
</comment>
<comment type="developmental stage">
    <text>Primary spermatocytes.</text>
</comment>
<comment type="domain">
    <text>This protein is mostly composed of repetitive C-G-P motifs.</text>
</comment>
<comment type="similarity">
    <text evidence="1">Belongs to the MST(3)CGP family.</text>
</comment>